<evidence type="ECO:0000255" key="1">
    <source>
        <dbReference type="HAMAP-Rule" id="MF_00736"/>
    </source>
</evidence>
<evidence type="ECO:0000305" key="2"/>
<dbReference type="EMBL" id="AM420293">
    <property type="protein sequence ID" value="CAM06035.1"/>
    <property type="molecule type" value="Genomic_DNA"/>
</dbReference>
<dbReference type="RefSeq" id="WP_009944086.1">
    <property type="nucleotide sequence ID" value="NC_009142.1"/>
</dbReference>
<dbReference type="SMR" id="A4FPR0"/>
<dbReference type="STRING" id="405948.SACE_6871"/>
<dbReference type="KEGG" id="sen:SACE_6871"/>
<dbReference type="eggNOG" id="COG0080">
    <property type="taxonomic scope" value="Bacteria"/>
</dbReference>
<dbReference type="HOGENOM" id="CLU_074237_2_0_11"/>
<dbReference type="OrthoDB" id="9802408at2"/>
<dbReference type="Proteomes" id="UP000006728">
    <property type="component" value="Chromosome"/>
</dbReference>
<dbReference type="GO" id="GO:0022625">
    <property type="term" value="C:cytosolic large ribosomal subunit"/>
    <property type="evidence" value="ECO:0007669"/>
    <property type="project" value="TreeGrafter"/>
</dbReference>
<dbReference type="GO" id="GO:0070180">
    <property type="term" value="F:large ribosomal subunit rRNA binding"/>
    <property type="evidence" value="ECO:0007669"/>
    <property type="project" value="UniProtKB-UniRule"/>
</dbReference>
<dbReference type="GO" id="GO:0003735">
    <property type="term" value="F:structural constituent of ribosome"/>
    <property type="evidence" value="ECO:0007669"/>
    <property type="project" value="InterPro"/>
</dbReference>
<dbReference type="GO" id="GO:0006412">
    <property type="term" value="P:translation"/>
    <property type="evidence" value="ECO:0007669"/>
    <property type="project" value="UniProtKB-UniRule"/>
</dbReference>
<dbReference type="CDD" id="cd00349">
    <property type="entry name" value="Ribosomal_L11"/>
    <property type="match status" value="1"/>
</dbReference>
<dbReference type="FunFam" id="1.10.10.250:FF:000001">
    <property type="entry name" value="50S ribosomal protein L11"/>
    <property type="match status" value="1"/>
</dbReference>
<dbReference type="FunFam" id="3.30.1550.10:FF:000001">
    <property type="entry name" value="50S ribosomal protein L11"/>
    <property type="match status" value="1"/>
</dbReference>
<dbReference type="Gene3D" id="1.10.10.250">
    <property type="entry name" value="Ribosomal protein L11, C-terminal domain"/>
    <property type="match status" value="1"/>
</dbReference>
<dbReference type="Gene3D" id="3.30.1550.10">
    <property type="entry name" value="Ribosomal protein L11/L12, N-terminal domain"/>
    <property type="match status" value="1"/>
</dbReference>
<dbReference type="HAMAP" id="MF_00736">
    <property type="entry name" value="Ribosomal_uL11"/>
    <property type="match status" value="1"/>
</dbReference>
<dbReference type="InterPro" id="IPR000911">
    <property type="entry name" value="Ribosomal_uL11"/>
</dbReference>
<dbReference type="InterPro" id="IPR006519">
    <property type="entry name" value="Ribosomal_uL11_bac-typ"/>
</dbReference>
<dbReference type="InterPro" id="IPR020783">
    <property type="entry name" value="Ribosomal_uL11_C"/>
</dbReference>
<dbReference type="InterPro" id="IPR036769">
    <property type="entry name" value="Ribosomal_uL11_C_sf"/>
</dbReference>
<dbReference type="InterPro" id="IPR020785">
    <property type="entry name" value="Ribosomal_uL11_CS"/>
</dbReference>
<dbReference type="InterPro" id="IPR020784">
    <property type="entry name" value="Ribosomal_uL11_N"/>
</dbReference>
<dbReference type="InterPro" id="IPR036796">
    <property type="entry name" value="Ribosomal_uL11_N_sf"/>
</dbReference>
<dbReference type="NCBIfam" id="TIGR01632">
    <property type="entry name" value="L11_bact"/>
    <property type="match status" value="1"/>
</dbReference>
<dbReference type="PANTHER" id="PTHR11661">
    <property type="entry name" value="60S RIBOSOMAL PROTEIN L12"/>
    <property type="match status" value="1"/>
</dbReference>
<dbReference type="PANTHER" id="PTHR11661:SF1">
    <property type="entry name" value="LARGE RIBOSOMAL SUBUNIT PROTEIN UL11M"/>
    <property type="match status" value="1"/>
</dbReference>
<dbReference type="Pfam" id="PF00298">
    <property type="entry name" value="Ribosomal_L11"/>
    <property type="match status" value="1"/>
</dbReference>
<dbReference type="Pfam" id="PF03946">
    <property type="entry name" value="Ribosomal_L11_N"/>
    <property type="match status" value="1"/>
</dbReference>
<dbReference type="SMART" id="SM00649">
    <property type="entry name" value="RL11"/>
    <property type="match status" value="1"/>
</dbReference>
<dbReference type="SUPFAM" id="SSF54747">
    <property type="entry name" value="Ribosomal L11/L12e N-terminal domain"/>
    <property type="match status" value="1"/>
</dbReference>
<dbReference type="SUPFAM" id="SSF46906">
    <property type="entry name" value="Ribosomal protein L11, C-terminal domain"/>
    <property type="match status" value="1"/>
</dbReference>
<dbReference type="PROSITE" id="PS00359">
    <property type="entry name" value="RIBOSOMAL_L11"/>
    <property type="match status" value="1"/>
</dbReference>
<comment type="function">
    <text evidence="1">Forms part of the ribosomal stalk which helps the ribosome interact with GTP-bound translation factors.</text>
</comment>
<comment type="subunit">
    <text evidence="1">Part of the ribosomal stalk of the 50S ribosomal subunit. Interacts with L10 and the large rRNA to form the base of the stalk. L10 forms an elongated spine to which L12 dimers bind in a sequential fashion forming a multimeric L10(L12)X complex.</text>
</comment>
<comment type="PTM">
    <text evidence="1">One or more lysine residues are methylated.</text>
</comment>
<comment type="similarity">
    <text evidence="1">Belongs to the universal ribosomal protein uL11 family.</text>
</comment>
<gene>
    <name evidence="1" type="primary">rplK</name>
    <name type="ordered locus">SACE_6871</name>
</gene>
<keyword id="KW-0488">Methylation</keyword>
<keyword id="KW-1185">Reference proteome</keyword>
<keyword id="KW-0687">Ribonucleoprotein</keyword>
<keyword id="KW-0689">Ribosomal protein</keyword>
<keyword id="KW-0694">RNA-binding</keyword>
<keyword id="KW-0699">rRNA-binding</keyword>
<sequence>MPPKKKKLAAIIKLQISAGQANPAPPVGPALGQHGVNIMEFCKAYNAATESQRGDVVPVEISVFEDRSFDFKLKTPPAAKLLLKAAGVQKGSGEPHKTKVGKVSMDQIREIAQTKMVDLNANDLDQASKIIAGTARSMGLTVEG</sequence>
<feature type="chain" id="PRO_1000046258" description="Large ribosomal subunit protein uL11">
    <location>
        <begin position="1"/>
        <end position="144"/>
    </location>
</feature>
<reference key="1">
    <citation type="journal article" date="2007" name="Nat. Biotechnol.">
        <title>Complete genome sequence of the erythromycin-producing bacterium Saccharopolyspora erythraea NRRL23338.</title>
        <authorList>
            <person name="Oliynyk M."/>
            <person name="Samborskyy M."/>
            <person name="Lester J.B."/>
            <person name="Mironenko T."/>
            <person name="Scott N."/>
            <person name="Dickens S."/>
            <person name="Haydock S.F."/>
            <person name="Leadlay P.F."/>
        </authorList>
    </citation>
    <scope>NUCLEOTIDE SEQUENCE [LARGE SCALE GENOMIC DNA]</scope>
    <source>
        <strain>ATCC 11635 / DSM 40517 / JCM 4748 / NBRC 13426 / NCIMB 8594 / NRRL 2338</strain>
    </source>
</reference>
<name>RL11_SACEN</name>
<accession>A4FPR0</accession>
<proteinExistence type="inferred from homology"/>
<organism>
    <name type="scientific">Saccharopolyspora erythraea (strain ATCC 11635 / DSM 40517 / JCM 4748 / NBRC 13426 / NCIMB 8594 / NRRL 2338)</name>
    <dbReference type="NCBI Taxonomy" id="405948"/>
    <lineage>
        <taxon>Bacteria</taxon>
        <taxon>Bacillati</taxon>
        <taxon>Actinomycetota</taxon>
        <taxon>Actinomycetes</taxon>
        <taxon>Pseudonocardiales</taxon>
        <taxon>Pseudonocardiaceae</taxon>
        <taxon>Saccharopolyspora</taxon>
    </lineage>
</organism>
<protein>
    <recommendedName>
        <fullName evidence="1">Large ribosomal subunit protein uL11</fullName>
    </recommendedName>
    <alternativeName>
        <fullName evidence="2">50S ribosomal protein L11</fullName>
    </alternativeName>
</protein>